<accession>A8GIF0</accession>
<proteinExistence type="inferred from homology"/>
<reference key="1">
    <citation type="submission" date="2007-09" db="EMBL/GenBank/DDBJ databases">
        <title>Complete sequence of chromosome of Serratia proteamaculans 568.</title>
        <authorList>
            <consortium name="US DOE Joint Genome Institute"/>
            <person name="Copeland A."/>
            <person name="Lucas S."/>
            <person name="Lapidus A."/>
            <person name="Barry K."/>
            <person name="Glavina del Rio T."/>
            <person name="Dalin E."/>
            <person name="Tice H."/>
            <person name="Pitluck S."/>
            <person name="Chain P."/>
            <person name="Malfatti S."/>
            <person name="Shin M."/>
            <person name="Vergez L."/>
            <person name="Schmutz J."/>
            <person name="Larimer F."/>
            <person name="Land M."/>
            <person name="Hauser L."/>
            <person name="Kyrpides N."/>
            <person name="Kim E."/>
            <person name="Taghavi S."/>
            <person name="Newman L."/>
            <person name="Vangronsveld J."/>
            <person name="van der Lelie D."/>
            <person name="Richardson P."/>
        </authorList>
    </citation>
    <scope>NUCLEOTIDE SEQUENCE [LARGE SCALE GENOMIC DNA]</scope>
    <source>
        <strain>568</strain>
    </source>
</reference>
<evidence type="ECO:0000255" key="1">
    <source>
        <dbReference type="HAMAP-Rule" id="MF_01519"/>
    </source>
</evidence>
<feature type="chain" id="PRO_1000068620" description="UPF0325 protein Spro_3794">
    <location>
        <begin position="1"/>
        <end position="129"/>
    </location>
</feature>
<sequence length="129" mass="15208">MYDNLKSLGINQPEDVDRYSLRQEANNDILKIYFRKDKGEFFAKSVKFKYPRQRKTVVADNAGQGYKEIHEINPNLRYVIDELDQLCQRDQVEVDLKRKILDDLRHLEGVVSHKIAEIESDLEKLTRGK</sequence>
<organism>
    <name type="scientific">Serratia proteamaculans (strain 568)</name>
    <dbReference type="NCBI Taxonomy" id="399741"/>
    <lineage>
        <taxon>Bacteria</taxon>
        <taxon>Pseudomonadati</taxon>
        <taxon>Pseudomonadota</taxon>
        <taxon>Gammaproteobacteria</taxon>
        <taxon>Enterobacterales</taxon>
        <taxon>Yersiniaceae</taxon>
        <taxon>Serratia</taxon>
    </lineage>
</organism>
<gene>
    <name type="ordered locus">Spro_3794</name>
</gene>
<name>Y3794_SERP5</name>
<comment type="similarity">
    <text evidence="1">Belongs to the UPF0325 family.</text>
</comment>
<protein>
    <recommendedName>
        <fullName evidence="1">UPF0325 protein Spro_3794</fullName>
    </recommendedName>
</protein>
<dbReference type="EMBL" id="CP000826">
    <property type="protein sequence ID" value="ABV42890.1"/>
    <property type="molecule type" value="Genomic_DNA"/>
</dbReference>
<dbReference type="SMR" id="A8GIF0"/>
<dbReference type="STRING" id="399741.Spro_3794"/>
<dbReference type="KEGG" id="spe:Spro_3794"/>
<dbReference type="eggNOG" id="ENOG502ZBV4">
    <property type="taxonomic scope" value="Bacteria"/>
</dbReference>
<dbReference type="HOGENOM" id="CLU_136774_0_0_6"/>
<dbReference type="OrthoDB" id="5624524at2"/>
<dbReference type="HAMAP" id="MF_01519">
    <property type="entry name" value="UPF0325"/>
    <property type="match status" value="1"/>
</dbReference>
<dbReference type="InterPro" id="IPR020911">
    <property type="entry name" value="UPF0325"/>
</dbReference>
<dbReference type="NCBIfam" id="NF010213">
    <property type="entry name" value="PRK13677.1"/>
    <property type="match status" value="1"/>
</dbReference>
<dbReference type="Pfam" id="PF11944">
    <property type="entry name" value="DUF3461"/>
    <property type="match status" value="1"/>
</dbReference>